<feature type="chain" id="PRO_0000235106" description="4-diphosphocytidyl-2-C-methyl-D-erythritol kinase">
    <location>
        <begin position="1"/>
        <end position="308"/>
    </location>
</feature>
<feature type="active site" evidence="1">
    <location>
        <position position="23"/>
    </location>
</feature>
<feature type="active site" evidence="1">
    <location>
        <position position="150"/>
    </location>
</feature>
<feature type="binding site" evidence="1">
    <location>
        <begin position="108"/>
        <end position="118"/>
    </location>
    <ligand>
        <name>ATP</name>
        <dbReference type="ChEBI" id="CHEBI:30616"/>
    </ligand>
</feature>
<organism>
    <name type="scientific">Nitrobacter winogradskyi (strain ATCC 25391 / DSM 10237 / CIP 104748 / NCIMB 11846 / Nb-255)</name>
    <dbReference type="NCBI Taxonomy" id="323098"/>
    <lineage>
        <taxon>Bacteria</taxon>
        <taxon>Pseudomonadati</taxon>
        <taxon>Pseudomonadota</taxon>
        <taxon>Alphaproteobacteria</taxon>
        <taxon>Hyphomicrobiales</taxon>
        <taxon>Nitrobacteraceae</taxon>
        <taxon>Nitrobacter</taxon>
    </lineage>
</organism>
<name>ISPE_NITWN</name>
<sequence length="308" mass="31932">MIVTGATDLETAAPALSETARAKVNLTLRVVGRRADGFHDLESVVAFADCVDRLTLTQGAELSLVAAGPRAQECGQTADNLVLTAARLLGERIPDLKAGAFALDKYLPVAAGIGGGSADAAAALRLLARANGLSIDDPRLIETARLTGADVPVCVRSESCVMTGVGESLLPLDVPAMPAVLVNPRVPVATKDVFAALGLRKGQLNVGVNDLIEAIVWPEAGAPVDDWLAMLSDGANDLEAPAIRVQPVIGEVLARLRSTGARLSRMSGSGATCFAIFDDEAAAHHAAQTIRLDRPQWWVHVGTLGGGS</sequence>
<proteinExistence type="inferred from homology"/>
<accession>Q3SPE5</accession>
<comment type="function">
    <text evidence="1">Catalyzes the phosphorylation of the position 2 hydroxy group of 4-diphosphocytidyl-2C-methyl-D-erythritol.</text>
</comment>
<comment type="catalytic activity">
    <reaction evidence="1">
        <text>4-CDP-2-C-methyl-D-erythritol + ATP = 4-CDP-2-C-methyl-D-erythritol 2-phosphate + ADP + H(+)</text>
        <dbReference type="Rhea" id="RHEA:18437"/>
        <dbReference type="ChEBI" id="CHEBI:15378"/>
        <dbReference type="ChEBI" id="CHEBI:30616"/>
        <dbReference type="ChEBI" id="CHEBI:57823"/>
        <dbReference type="ChEBI" id="CHEBI:57919"/>
        <dbReference type="ChEBI" id="CHEBI:456216"/>
        <dbReference type="EC" id="2.7.1.148"/>
    </reaction>
</comment>
<comment type="pathway">
    <text evidence="1">Isoprenoid biosynthesis; isopentenyl diphosphate biosynthesis via DXP pathway; isopentenyl diphosphate from 1-deoxy-D-xylulose 5-phosphate: step 3/6.</text>
</comment>
<comment type="similarity">
    <text evidence="1">Belongs to the GHMP kinase family. IspE subfamily.</text>
</comment>
<protein>
    <recommendedName>
        <fullName evidence="1">4-diphosphocytidyl-2-C-methyl-D-erythritol kinase</fullName>
        <shortName evidence="1">CMK</shortName>
        <ecNumber evidence="1">2.7.1.148</ecNumber>
    </recommendedName>
    <alternativeName>
        <fullName evidence="1">4-(cytidine-5'-diphospho)-2-C-methyl-D-erythritol kinase</fullName>
    </alternativeName>
</protein>
<reference key="1">
    <citation type="journal article" date="2006" name="Appl. Environ. Microbiol.">
        <title>Genome sequence of the chemolithoautotrophic nitrite-oxidizing bacterium Nitrobacter winogradskyi Nb-255.</title>
        <authorList>
            <person name="Starkenburg S.R."/>
            <person name="Chain P.S.G."/>
            <person name="Sayavedra-Soto L.A."/>
            <person name="Hauser L."/>
            <person name="Land M.L."/>
            <person name="Larimer F.W."/>
            <person name="Malfatti S.A."/>
            <person name="Klotz M.G."/>
            <person name="Bottomley P.J."/>
            <person name="Arp D.J."/>
            <person name="Hickey W.J."/>
        </authorList>
    </citation>
    <scope>NUCLEOTIDE SEQUENCE [LARGE SCALE GENOMIC DNA]</scope>
    <source>
        <strain>ATCC 25391 / DSM 10237 / CIP 104748 / NCIMB 11846 / Nb-255</strain>
    </source>
</reference>
<keyword id="KW-0067">ATP-binding</keyword>
<keyword id="KW-0414">Isoprene biosynthesis</keyword>
<keyword id="KW-0418">Kinase</keyword>
<keyword id="KW-0547">Nucleotide-binding</keyword>
<keyword id="KW-1185">Reference proteome</keyword>
<keyword id="KW-0808">Transferase</keyword>
<gene>
    <name evidence="1" type="primary">ispE</name>
    <name type="ordered locus">Nwi_2593</name>
</gene>
<evidence type="ECO:0000255" key="1">
    <source>
        <dbReference type="HAMAP-Rule" id="MF_00061"/>
    </source>
</evidence>
<dbReference type="EC" id="2.7.1.148" evidence="1"/>
<dbReference type="EMBL" id="CP000115">
    <property type="protein sequence ID" value="ABA05846.1"/>
    <property type="molecule type" value="Genomic_DNA"/>
</dbReference>
<dbReference type="RefSeq" id="WP_011315796.1">
    <property type="nucleotide sequence ID" value="NC_007406.1"/>
</dbReference>
<dbReference type="SMR" id="Q3SPE5"/>
<dbReference type="STRING" id="323098.Nwi_2593"/>
<dbReference type="KEGG" id="nwi:Nwi_2593"/>
<dbReference type="eggNOG" id="COG1947">
    <property type="taxonomic scope" value="Bacteria"/>
</dbReference>
<dbReference type="HOGENOM" id="CLU_053057_1_0_5"/>
<dbReference type="OrthoDB" id="9809438at2"/>
<dbReference type="UniPathway" id="UPA00056">
    <property type="reaction ID" value="UER00094"/>
</dbReference>
<dbReference type="Proteomes" id="UP000002531">
    <property type="component" value="Chromosome"/>
</dbReference>
<dbReference type="GO" id="GO:0050515">
    <property type="term" value="F:4-(cytidine 5'-diphospho)-2-C-methyl-D-erythritol kinase activity"/>
    <property type="evidence" value="ECO:0007669"/>
    <property type="project" value="UniProtKB-UniRule"/>
</dbReference>
<dbReference type="GO" id="GO:0005524">
    <property type="term" value="F:ATP binding"/>
    <property type="evidence" value="ECO:0007669"/>
    <property type="project" value="UniProtKB-UniRule"/>
</dbReference>
<dbReference type="GO" id="GO:0019288">
    <property type="term" value="P:isopentenyl diphosphate biosynthetic process, methylerythritol 4-phosphate pathway"/>
    <property type="evidence" value="ECO:0007669"/>
    <property type="project" value="UniProtKB-UniRule"/>
</dbReference>
<dbReference type="GO" id="GO:0016114">
    <property type="term" value="P:terpenoid biosynthetic process"/>
    <property type="evidence" value="ECO:0007669"/>
    <property type="project" value="InterPro"/>
</dbReference>
<dbReference type="Gene3D" id="3.30.230.10">
    <property type="match status" value="1"/>
</dbReference>
<dbReference type="Gene3D" id="3.30.70.890">
    <property type="entry name" value="GHMP kinase, C-terminal domain"/>
    <property type="match status" value="1"/>
</dbReference>
<dbReference type="HAMAP" id="MF_00061">
    <property type="entry name" value="IspE"/>
    <property type="match status" value="1"/>
</dbReference>
<dbReference type="InterPro" id="IPR013750">
    <property type="entry name" value="GHMP_kinase_C_dom"/>
</dbReference>
<dbReference type="InterPro" id="IPR036554">
    <property type="entry name" value="GHMP_kinase_C_sf"/>
</dbReference>
<dbReference type="InterPro" id="IPR006204">
    <property type="entry name" value="GHMP_kinase_N_dom"/>
</dbReference>
<dbReference type="InterPro" id="IPR004424">
    <property type="entry name" value="IspE"/>
</dbReference>
<dbReference type="InterPro" id="IPR020568">
    <property type="entry name" value="Ribosomal_Su5_D2-typ_SF"/>
</dbReference>
<dbReference type="InterPro" id="IPR014721">
    <property type="entry name" value="Ribsml_uS5_D2-typ_fold_subgr"/>
</dbReference>
<dbReference type="NCBIfam" id="TIGR00154">
    <property type="entry name" value="ispE"/>
    <property type="match status" value="1"/>
</dbReference>
<dbReference type="NCBIfam" id="NF011202">
    <property type="entry name" value="PRK14608.1"/>
    <property type="match status" value="1"/>
</dbReference>
<dbReference type="PANTHER" id="PTHR43527">
    <property type="entry name" value="4-DIPHOSPHOCYTIDYL-2-C-METHYL-D-ERYTHRITOL KINASE, CHLOROPLASTIC"/>
    <property type="match status" value="1"/>
</dbReference>
<dbReference type="PANTHER" id="PTHR43527:SF2">
    <property type="entry name" value="4-DIPHOSPHOCYTIDYL-2-C-METHYL-D-ERYTHRITOL KINASE, CHLOROPLASTIC"/>
    <property type="match status" value="1"/>
</dbReference>
<dbReference type="Pfam" id="PF08544">
    <property type="entry name" value="GHMP_kinases_C"/>
    <property type="match status" value="1"/>
</dbReference>
<dbReference type="Pfam" id="PF00288">
    <property type="entry name" value="GHMP_kinases_N"/>
    <property type="match status" value="1"/>
</dbReference>
<dbReference type="PIRSF" id="PIRSF010376">
    <property type="entry name" value="IspE"/>
    <property type="match status" value="1"/>
</dbReference>
<dbReference type="SUPFAM" id="SSF55060">
    <property type="entry name" value="GHMP Kinase, C-terminal domain"/>
    <property type="match status" value="1"/>
</dbReference>
<dbReference type="SUPFAM" id="SSF54211">
    <property type="entry name" value="Ribosomal protein S5 domain 2-like"/>
    <property type="match status" value="1"/>
</dbReference>